<name>SELO_CUPMC</name>
<sequence length="544" mass="60199">MCTHTGHSAAPSLSGLIDAEPCHFWLPLMPNEPTDVLPPTSFNVPFGTRPGIAALGERFFTRLSPTPLPSPYLVSVAPAAAALLGWNETDLQDAVKDPAFIDSFVGNAVPDWADPLATVYSGHQFGVWAGQLGDGRAIRLAEAQTPGGPWEIQLKGGGLTPYSRMADGRAVLRSSIREYLCSEAMYALGVPTTRALSIIGSDAPVRRETIETSAVVTRLAPSFIRFGHFEHFAAREDHASLRQLADFVIDNFYPACRNAANPYQALLRDVSLLTADMVAHWQAVGFCHGVMNTDNMSILGLTIDYGPFGFLDAFDANHICNHSDQQGRYAYSQQPQVAFWNLHCLAQALLPLWRDANAADPEAEKAAAVEAAREALDPFRDRYAEAFFRHYRAKLGLRSEQEQDETLMTNLFRVLHENRVDYTSFWRNLSRVSSLDNSHDAAVRDLFLDRAAWDAWAAEYRARLQSEQSDDAARTTAMLATNPKYVLRNHMAETAIRAARDKDFSEVDRLMAVLSKPFDEQPEAESYAKLPPDWASGLEVSCSS</sequence>
<proteinExistence type="inferred from homology"/>
<evidence type="ECO:0000255" key="1">
    <source>
        <dbReference type="HAMAP-Rule" id="MF_00692"/>
    </source>
</evidence>
<dbReference type="EC" id="2.7.7.-" evidence="1"/>
<dbReference type="EC" id="2.7.7.108" evidence="1"/>
<dbReference type="EMBL" id="CP000352">
    <property type="protein sequence ID" value="ABF08743.1"/>
    <property type="molecule type" value="Genomic_DNA"/>
</dbReference>
<dbReference type="SMR" id="Q1LM83"/>
<dbReference type="STRING" id="266264.Rmet_1864"/>
<dbReference type="KEGG" id="rme:Rmet_1864"/>
<dbReference type="eggNOG" id="COG0397">
    <property type="taxonomic scope" value="Bacteria"/>
</dbReference>
<dbReference type="HOGENOM" id="CLU_010245_4_0_4"/>
<dbReference type="Proteomes" id="UP000002429">
    <property type="component" value="Chromosome"/>
</dbReference>
<dbReference type="GO" id="GO:0070733">
    <property type="term" value="F:AMPylase activity"/>
    <property type="evidence" value="ECO:0007669"/>
    <property type="project" value="RHEA"/>
</dbReference>
<dbReference type="GO" id="GO:0005524">
    <property type="term" value="F:ATP binding"/>
    <property type="evidence" value="ECO:0007669"/>
    <property type="project" value="UniProtKB-UniRule"/>
</dbReference>
<dbReference type="GO" id="GO:0000287">
    <property type="term" value="F:magnesium ion binding"/>
    <property type="evidence" value="ECO:0007669"/>
    <property type="project" value="UniProtKB-UniRule"/>
</dbReference>
<dbReference type="HAMAP" id="MF_00692">
    <property type="entry name" value="YdiU_SelO"/>
    <property type="match status" value="1"/>
</dbReference>
<dbReference type="InterPro" id="IPR003846">
    <property type="entry name" value="SelO"/>
</dbReference>
<dbReference type="NCBIfam" id="NF000658">
    <property type="entry name" value="PRK00029.1"/>
    <property type="match status" value="1"/>
</dbReference>
<dbReference type="PANTHER" id="PTHR32057">
    <property type="entry name" value="PROTEIN ADENYLYLTRANSFERASE SELO, MITOCHONDRIAL"/>
    <property type="match status" value="1"/>
</dbReference>
<dbReference type="PANTHER" id="PTHR32057:SF14">
    <property type="entry name" value="PROTEIN ADENYLYLTRANSFERASE SELO, MITOCHONDRIAL"/>
    <property type="match status" value="1"/>
</dbReference>
<dbReference type="Pfam" id="PF02696">
    <property type="entry name" value="SelO"/>
    <property type="match status" value="1"/>
</dbReference>
<protein>
    <recommendedName>
        <fullName evidence="1">Protein nucleotidyltransferase YdiU</fullName>
        <ecNumber evidence="1">2.7.7.-</ecNumber>
    </recommendedName>
    <alternativeName>
        <fullName evidence="1">Protein adenylyltransferase YdiU</fullName>
        <ecNumber evidence="1">2.7.7.108</ecNumber>
    </alternativeName>
    <alternativeName>
        <fullName evidence="1">Protein uridylyltransferase YdiU</fullName>
        <ecNumber evidence="1">2.7.7.-</ecNumber>
    </alternativeName>
</protein>
<keyword id="KW-0067">ATP-binding</keyword>
<keyword id="KW-0460">Magnesium</keyword>
<keyword id="KW-0464">Manganese</keyword>
<keyword id="KW-0479">Metal-binding</keyword>
<keyword id="KW-0547">Nucleotide-binding</keyword>
<keyword id="KW-0548">Nucleotidyltransferase</keyword>
<keyword id="KW-1185">Reference proteome</keyword>
<keyword id="KW-0808">Transferase</keyword>
<comment type="function">
    <text evidence="1">Nucleotidyltransferase involved in the post-translational modification of proteins. It can catalyze the addition of adenosine monophosphate (AMP) or uridine monophosphate (UMP) to a protein, resulting in modifications known as AMPylation and UMPylation.</text>
</comment>
<comment type="catalytic activity">
    <reaction evidence="1">
        <text>L-seryl-[protein] + ATP = 3-O-(5'-adenylyl)-L-seryl-[protein] + diphosphate</text>
        <dbReference type="Rhea" id="RHEA:58120"/>
        <dbReference type="Rhea" id="RHEA-COMP:9863"/>
        <dbReference type="Rhea" id="RHEA-COMP:15073"/>
        <dbReference type="ChEBI" id="CHEBI:29999"/>
        <dbReference type="ChEBI" id="CHEBI:30616"/>
        <dbReference type="ChEBI" id="CHEBI:33019"/>
        <dbReference type="ChEBI" id="CHEBI:142516"/>
        <dbReference type="EC" id="2.7.7.108"/>
    </reaction>
</comment>
<comment type="catalytic activity">
    <reaction evidence="1">
        <text>L-threonyl-[protein] + ATP = 3-O-(5'-adenylyl)-L-threonyl-[protein] + diphosphate</text>
        <dbReference type="Rhea" id="RHEA:54292"/>
        <dbReference type="Rhea" id="RHEA-COMP:11060"/>
        <dbReference type="Rhea" id="RHEA-COMP:13847"/>
        <dbReference type="ChEBI" id="CHEBI:30013"/>
        <dbReference type="ChEBI" id="CHEBI:30616"/>
        <dbReference type="ChEBI" id="CHEBI:33019"/>
        <dbReference type="ChEBI" id="CHEBI:138113"/>
        <dbReference type="EC" id="2.7.7.108"/>
    </reaction>
</comment>
<comment type="catalytic activity">
    <reaction evidence="1">
        <text>L-tyrosyl-[protein] + ATP = O-(5'-adenylyl)-L-tyrosyl-[protein] + diphosphate</text>
        <dbReference type="Rhea" id="RHEA:54288"/>
        <dbReference type="Rhea" id="RHEA-COMP:10136"/>
        <dbReference type="Rhea" id="RHEA-COMP:13846"/>
        <dbReference type="ChEBI" id="CHEBI:30616"/>
        <dbReference type="ChEBI" id="CHEBI:33019"/>
        <dbReference type="ChEBI" id="CHEBI:46858"/>
        <dbReference type="ChEBI" id="CHEBI:83624"/>
        <dbReference type="EC" id="2.7.7.108"/>
    </reaction>
</comment>
<comment type="catalytic activity">
    <reaction evidence="1">
        <text>L-histidyl-[protein] + UTP = N(tele)-(5'-uridylyl)-L-histidyl-[protein] + diphosphate</text>
        <dbReference type="Rhea" id="RHEA:83891"/>
        <dbReference type="Rhea" id="RHEA-COMP:9745"/>
        <dbReference type="Rhea" id="RHEA-COMP:20239"/>
        <dbReference type="ChEBI" id="CHEBI:29979"/>
        <dbReference type="ChEBI" id="CHEBI:33019"/>
        <dbReference type="ChEBI" id="CHEBI:46398"/>
        <dbReference type="ChEBI" id="CHEBI:233474"/>
    </reaction>
</comment>
<comment type="catalytic activity">
    <reaction evidence="1">
        <text>L-seryl-[protein] + UTP = O-(5'-uridylyl)-L-seryl-[protein] + diphosphate</text>
        <dbReference type="Rhea" id="RHEA:64604"/>
        <dbReference type="Rhea" id="RHEA-COMP:9863"/>
        <dbReference type="Rhea" id="RHEA-COMP:16635"/>
        <dbReference type="ChEBI" id="CHEBI:29999"/>
        <dbReference type="ChEBI" id="CHEBI:33019"/>
        <dbReference type="ChEBI" id="CHEBI:46398"/>
        <dbReference type="ChEBI" id="CHEBI:156051"/>
    </reaction>
</comment>
<comment type="catalytic activity">
    <reaction evidence="1">
        <text>L-tyrosyl-[protein] + UTP = O-(5'-uridylyl)-L-tyrosyl-[protein] + diphosphate</text>
        <dbReference type="Rhea" id="RHEA:83887"/>
        <dbReference type="Rhea" id="RHEA-COMP:10136"/>
        <dbReference type="Rhea" id="RHEA-COMP:20238"/>
        <dbReference type="ChEBI" id="CHEBI:33019"/>
        <dbReference type="ChEBI" id="CHEBI:46398"/>
        <dbReference type="ChEBI" id="CHEBI:46858"/>
        <dbReference type="ChEBI" id="CHEBI:90602"/>
    </reaction>
</comment>
<comment type="cofactor">
    <cofactor evidence="1">
        <name>Mg(2+)</name>
        <dbReference type="ChEBI" id="CHEBI:18420"/>
    </cofactor>
    <cofactor evidence="1">
        <name>Mn(2+)</name>
        <dbReference type="ChEBI" id="CHEBI:29035"/>
    </cofactor>
</comment>
<comment type="similarity">
    <text evidence="1">Belongs to the SELO family.</text>
</comment>
<accession>Q1LM83</accession>
<gene>
    <name evidence="1" type="primary">ydiU</name>
    <name evidence="1" type="synonym">selO</name>
    <name type="ordered locus">Rmet_1864</name>
</gene>
<reference key="1">
    <citation type="journal article" date="2010" name="PLoS ONE">
        <title>The complete genome sequence of Cupriavidus metallidurans strain CH34, a master survivalist in harsh and anthropogenic environments.</title>
        <authorList>
            <person name="Janssen P.J."/>
            <person name="Van Houdt R."/>
            <person name="Moors H."/>
            <person name="Monsieurs P."/>
            <person name="Morin N."/>
            <person name="Michaux A."/>
            <person name="Benotmane M.A."/>
            <person name="Leys N."/>
            <person name="Vallaeys T."/>
            <person name="Lapidus A."/>
            <person name="Monchy S."/>
            <person name="Medigue C."/>
            <person name="Taghavi S."/>
            <person name="McCorkle S."/>
            <person name="Dunn J."/>
            <person name="van der Lelie D."/>
            <person name="Mergeay M."/>
        </authorList>
    </citation>
    <scope>NUCLEOTIDE SEQUENCE [LARGE SCALE GENOMIC DNA]</scope>
    <source>
        <strain>ATCC 43123 / DSM 2839 / NBRC 102507 / CH34</strain>
    </source>
</reference>
<feature type="chain" id="PRO_0000271851" description="Protein nucleotidyltransferase YdiU">
    <location>
        <begin position="1"/>
        <end position="544"/>
    </location>
</feature>
<feature type="active site" description="Proton acceptor" evidence="1">
    <location>
        <position position="294"/>
    </location>
</feature>
<feature type="binding site" evidence="1">
    <location>
        <position position="133"/>
    </location>
    <ligand>
        <name>ATP</name>
        <dbReference type="ChEBI" id="CHEBI:30616"/>
    </ligand>
</feature>
<feature type="binding site" evidence="1">
    <location>
        <position position="135"/>
    </location>
    <ligand>
        <name>ATP</name>
        <dbReference type="ChEBI" id="CHEBI:30616"/>
    </ligand>
</feature>
<feature type="binding site" evidence="1">
    <location>
        <position position="136"/>
    </location>
    <ligand>
        <name>ATP</name>
        <dbReference type="ChEBI" id="CHEBI:30616"/>
    </ligand>
</feature>
<feature type="binding site" evidence="1">
    <location>
        <position position="155"/>
    </location>
    <ligand>
        <name>ATP</name>
        <dbReference type="ChEBI" id="CHEBI:30616"/>
    </ligand>
</feature>
<feature type="binding site" evidence="1">
    <location>
        <position position="167"/>
    </location>
    <ligand>
        <name>ATP</name>
        <dbReference type="ChEBI" id="CHEBI:30616"/>
    </ligand>
</feature>
<feature type="binding site" evidence="1">
    <location>
        <position position="168"/>
    </location>
    <ligand>
        <name>ATP</name>
        <dbReference type="ChEBI" id="CHEBI:30616"/>
    </ligand>
</feature>
<feature type="binding site" evidence="1">
    <location>
        <position position="218"/>
    </location>
    <ligand>
        <name>ATP</name>
        <dbReference type="ChEBI" id="CHEBI:30616"/>
    </ligand>
</feature>
<feature type="binding site" evidence="1">
    <location>
        <position position="225"/>
    </location>
    <ligand>
        <name>ATP</name>
        <dbReference type="ChEBI" id="CHEBI:30616"/>
    </ligand>
</feature>
<feature type="binding site" evidence="1">
    <location>
        <position position="295"/>
    </location>
    <ligand>
        <name>Mg(2+)</name>
        <dbReference type="ChEBI" id="CHEBI:18420"/>
    </ligand>
</feature>
<feature type="binding site" evidence="1">
    <location>
        <position position="304"/>
    </location>
    <ligand>
        <name>ATP</name>
        <dbReference type="ChEBI" id="CHEBI:30616"/>
    </ligand>
</feature>
<feature type="binding site" evidence="1">
    <location>
        <position position="304"/>
    </location>
    <ligand>
        <name>Mg(2+)</name>
        <dbReference type="ChEBI" id="CHEBI:18420"/>
    </ligand>
</feature>
<organism>
    <name type="scientific">Cupriavidus metallidurans (strain ATCC 43123 / DSM 2839 / NBRC 102507 / CH34)</name>
    <name type="common">Ralstonia metallidurans</name>
    <dbReference type="NCBI Taxonomy" id="266264"/>
    <lineage>
        <taxon>Bacteria</taxon>
        <taxon>Pseudomonadati</taxon>
        <taxon>Pseudomonadota</taxon>
        <taxon>Betaproteobacteria</taxon>
        <taxon>Burkholderiales</taxon>
        <taxon>Burkholderiaceae</taxon>
        <taxon>Cupriavidus</taxon>
    </lineage>
</organism>